<organism>
    <name type="scientific">Xanthomonas campestris pv. campestris (strain ATCC 33913 / DSM 3586 / NCPPB 528 / LMG 568 / P 25)</name>
    <dbReference type="NCBI Taxonomy" id="190485"/>
    <lineage>
        <taxon>Bacteria</taxon>
        <taxon>Pseudomonadati</taxon>
        <taxon>Pseudomonadota</taxon>
        <taxon>Gammaproteobacteria</taxon>
        <taxon>Lysobacterales</taxon>
        <taxon>Lysobacteraceae</taxon>
        <taxon>Xanthomonas</taxon>
    </lineage>
</organism>
<proteinExistence type="inferred from homology"/>
<comment type="function">
    <text evidence="1">Key enzyme in the regulation of glycerol uptake and metabolism. Catalyzes the phosphorylation of glycerol to yield sn-glycerol 3-phosphate.</text>
</comment>
<comment type="catalytic activity">
    <reaction evidence="1">
        <text>glycerol + ATP = sn-glycerol 3-phosphate + ADP + H(+)</text>
        <dbReference type="Rhea" id="RHEA:21644"/>
        <dbReference type="ChEBI" id="CHEBI:15378"/>
        <dbReference type="ChEBI" id="CHEBI:17754"/>
        <dbReference type="ChEBI" id="CHEBI:30616"/>
        <dbReference type="ChEBI" id="CHEBI:57597"/>
        <dbReference type="ChEBI" id="CHEBI:456216"/>
        <dbReference type="EC" id="2.7.1.30"/>
    </reaction>
</comment>
<comment type="activity regulation">
    <text evidence="1">Inhibited by fructose 1,6-bisphosphate (FBP).</text>
</comment>
<comment type="pathway">
    <text evidence="1">Polyol metabolism; glycerol degradation via glycerol kinase pathway; sn-glycerol 3-phosphate from glycerol: step 1/1.</text>
</comment>
<comment type="similarity">
    <text evidence="1">Belongs to the FGGY kinase family.</text>
</comment>
<gene>
    <name evidence="1" type="primary">glpK</name>
    <name type="ordered locus">XCC0358</name>
</gene>
<evidence type="ECO:0000255" key="1">
    <source>
        <dbReference type="HAMAP-Rule" id="MF_00186"/>
    </source>
</evidence>
<accession>Q8PDI0</accession>
<keyword id="KW-0067">ATP-binding</keyword>
<keyword id="KW-0319">Glycerol metabolism</keyword>
<keyword id="KW-0418">Kinase</keyword>
<keyword id="KW-0547">Nucleotide-binding</keyword>
<keyword id="KW-1185">Reference proteome</keyword>
<keyword id="KW-0808">Transferase</keyword>
<sequence length="499" mass="55248">MEKKYVLAIDQGTTSSRAMLFDRQGKVAGVAQREFGQIFPQPGWVEHNPREIMTSVYTTITELLNNAQIDAREISGIGITNQRETAVVWDKATGQPIYNAIVWQSRQTKDICTQLKEAGHEQMVRDKTGLLIDAYFSGTKVKWILDHVDGARERARKGELAFGTIDSWLIWNLTGGKVHVTDYTNASRTMMYNIHTLEWDAELLEMLDVPAQMLPEVRSSSEVYGMTQTQYFYGEQVPIAGIAGDQQAALFGQACFEPGMAKNTYGTGCFMLMNTGDKAVASKAGLLTTIAWGIDGKVEYALEGAIFVAGSVVQWLRDGLRMFGKASDSQAYAERAGDNDGVYFVPAFVGLGAPYWRSDIRGAVFGLTRGTSKEHFVRAAVESMAYQTRDVLTAMQSDSGIELKELRADGGAIANDFMAQFQSDILNVPVLRPEVAETTALGAAYLAGLATGFWSSREEIAKQWAVDRRFEPNMPEERREQLYAGWQQAVEATMGFRIS</sequence>
<name>GLPK_XANCP</name>
<feature type="chain" id="PRO_0000059523" description="Glycerol kinase">
    <location>
        <begin position="1"/>
        <end position="499"/>
    </location>
</feature>
<feature type="binding site" evidence="1">
    <location>
        <position position="13"/>
    </location>
    <ligand>
        <name>ADP</name>
        <dbReference type="ChEBI" id="CHEBI:456216"/>
    </ligand>
</feature>
<feature type="binding site" evidence="1">
    <location>
        <position position="13"/>
    </location>
    <ligand>
        <name>ATP</name>
        <dbReference type="ChEBI" id="CHEBI:30616"/>
    </ligand>
</feature>
<feature type="binding site" evidence="1">
    <location>
        <position position="13"/>
    </location>
    <ligand>
        <name>sn-glycerol 3-phosphate</name>
        <dbReference type="ChEBI" id="CHEBI:57597"/>
    </ligand>
</feature>
<feature type="binding site" evidence="1">
    <location>
        <position position="14"/>
    </location>
    <ligand>
        <name>ATP</name>
        <dbReference type="ChEBI" id="CHEBI:30616"/>
    </ligand>
</feature>
<feature type="binding site" evidence="1">
    <location>
        <position position="15"/>
    </location>
    <ligand>
        <name>ATP</name>
        <dbReference type="ChEBI" id="CHEBI:30616"/>
    </ligand>
</feature>
<feature type="binding site" evidence="1">
    <location>
        <position position="17"/>
    </location>
    <ligand>
        <name>ADP</name>
        <dbReference type="ChEBI" id="CHEBI:456216"/>
    </ligand>
</feature>
<feature type="binding site" evidence="1">
    <location>
        <position position="83"/>
    </location>
    <ligand>
        <name>glycerol</name>
        <dbReference type="ChEBI" id="CHEBI:17754"/>
    </ligand>
</feature>
<feature type="binding site" evidence="1">
    <location>
        <position position="83"/>
    </location>
    <ligand>
        <name>sn-glycerol 3-phosphate</name>
        <dbReference type="ChEBI" id="CHEBI:57597"/>
    </ligand>
</feature>
<feature type="binding site" evidence="1">
    <location>
        <position position="84"/>
    </location>
    <ligand>
        <name>glycerol</name>
        <dbReference type="ChEBI" id="CHEBI:17754"/>
    </ligand>
</feature>
<feature type="binding site" evidence="1">
    <location>
        <position position="84"/>
    </location>
    <ligand>
        <name>sn-glycerol 3-phosphate</name>
        <dbReference type="ChEBI" id="CHEBI:57597"/>
    </ligand>
</feature>
<feature type="binding site" evidence="1">
    <location>
        <position position="135"/>
    </location>
    <ligand>
        <name>glycerol</name>
        <dbReference type="ChEBI" id="CHEBI:17754"/>
    </ligand>
</feature>
<feature type="binding site" evidence="1">
    <location>
        <position position="135"/>
    </location>
    <ligand>
        <name>sn-glycerol 3-phosphate</name>
        <dbReference type="ChEBI" id="CHEBI:57597"/>
    </ligand>
</feature>
<feature type="binding site" evidence="1">
    <location>
        <position position="245"/>
    </location>
    <ligand>
        <name>glycerol</name>
        <dbReference type="ChEBI" id="CHEBI:17754"/>
    </ligand>
</feature>
<feature type="binding site" evidence="1">
    <location>
        <position position="245"/>
    </location>
    <ligand>
        <name>sn-glycerol 3-phosphate</name>
        <dbReference type="ChEBI" id="CHEBI:57597"/>
    </ligand>
</feature>
<feature type="binding site" evidence="1">
    <location>
        <position position="246"/>
    </location>
    <ligand>
        <name>glycerol</name>
        <dbReference type="ChEBI" id="CHEBI:17754"/>
    </ligand>
</feature>
<feature type="binding site" evidence="1">
    <location>
        <position position="267"/>
    </location>
    <ligand>
        <name>ADP</name>
        <dbReference type="ChEBI" id="CHEBI:456216"/>
    </ligand>
</feature>
<feature type="binding site" evidence="1">
    <location>
        <position position="267"/>
    </location>
    <ligand>
        <name>ATP</name>
        <dbReference type="ChEBI" id="CHEBI:30616"/>
    </ligand>
</feature>
<feature type="binding site" evidence="1">
    <location>
        <position position="310"/>
    </location>
    <ligand>
        <name>ADP</name>
        <dbReference type="ChEBI" id="CHEBI:456216"/>
    </ligand>
</feature>
<feature type="binding site" evidence="1">
    <location>
        <position position="310"/>
    </location>
    <ligand>
        <name>ATP</name>
        <dbReference type="ChEBI" id="CHEBI:30616"/>
    </ligand>
</feature>
<feature type="binding site" evidence="1">
    <location>
        <position position="314"/>
    </location>
    <ligand>
        <name>ATP</name>
        <dbReference type="ChEBI" id="CHEBI:30616"/>
    </ligand>
</feature>
<feature type="binding site" evidence="1">
    <location>
        <position position="411"/>
    </location>
    <ligand>
        <name>ADP</name>
        <dbReference type="ChEBI" id="CHEBI:456216"/>
    </ligand>
</feature>
<feature type="binding site" evidence="1">
    <location>
        <position position="411"/>
    </location>
    <ligand>
        <name>ATP</name>
        <dbReference type="ChEBI" id="CHEBI:30616"/>
    </ligand>
</feature>
<feature type="binding site" evidence="1">
    <location>
        <position position="415"/>
    </location>
    <ligand>
        <name>ADP</name>
        <dbReference type="ChEBI" id="CHEBI:456216"/>
    </ligand>
</feature>
<protein>
    <recommendedName>
        <fullName evidence="1">Glycerol kinase</fullName>
        <ecNumber evidence="1">2.7.1.30</ecNumber>
    </recommendedName>
    <alternativeName>
        <fullName evidence="1">ATP:glycerol 3-phosphotransferase</fullName>
    </alternativeName>
    <alternativeName>
        <fullName evidence="1">Glycerokinase</fullName>
        <shortName evidence="1">GK</shortName>
    </alternativeName>
</protein>
<dbReference type="EC" id="2.7.1.30" evidence="1"/>
<dbReference type="EMBL" id="AE008922">
    <property type="protein sequence ID" value="AAM39677.1"/>
    <property type="molecule type" value="Genomic_DNA"/>
</dbReference>
<dbReference type="RefSeq" id="NP_635753.1">
    <property type="nucleotide sequence ID" value="NC_003902.1"/>
</dbReference>
<dbReference type="RefSeq" id="WP_011035612.1">
    <property type="nucleotide sequence ID" value="NC_003902.1"/>
</dbReference>
<dbReference type="SMR" id="Q8PDI0"/>
<dbReference type="STRING" id="190485.XCC0358"/>
<dbReference type="EnsemblBacteria" id="AAM39677">
    <property type="protein sequence ID" value="AAM39677"/>
    <property type="gene ID" value="XCC0358"/>
</dbReference>
<dbReference type="KEGG" id="xcc:XCC0358"/>
<dbReference type="PATRIC" id="fig|190485.4.peg.393"/>
<dbReference type="eggNOG" id="COG0554">
    <property type="taxonomic scope" value="Bacteria"/>
</dbReference>
<dbReference type="HOGENOM" id="CLU_009281_2_3_6"/>
<dbReference type="OrthoDB" id="9805576at2"/>
<dbReference type="UniPathway" id="UPA00618">
    <property type="reaction ID" value="UER00672"/>
</dbReference>
<dbReference type="Proteomes" id="UP000001010">
    <property type="component" value="Chromosome"/>
</dbReference>
<dbReference type="GO" id="GO:0005829">
    <property type="term" value="C:cytosol"/>
    <property type="evidence" value="ECO:0000318"/>
    <property type="project" value="GO_Central"/>
</dbReference>
<dbReference type="GO" id="GO:0005524">
    <property type="term" value="F:ATP binding"/>
    <property type="evidence" value="ECO:0007669"/>
    <property type="project" value="UniProtKB-UniRule"/>
</dbReference>
<dbReference type="GO" id="GO:0004370">
    <property type="term" value="F:glycerol kinase activity"/>
    <property type="evidence" value="ECO:0000250"/>
    <property type="project" value="UniProtKB"/>
</dbReference>
<dbReference type="GO" id="GO:0019563">
    <property type="term" value="P:glycerol catabolic process"/>
    <property type="evidence" value="ECO:0000318"/>
    <property type="project" value="GO_Central"/>
</dbReference>
<dbReference type="GO" id="GO:0006071">
    <property type="term" value="P:glycerol metabolic process"/>
    <property type="evidence" value="ECO:0000250"/>
    <property type="project" value="UniProtKB"/>
</dbReference>
<dbReference type="GO" id="GO:0006072">
    <property type="term" value="P:glycerol-3-phosphate metabolic process"/>
    <property type="evidence" value="ECO:0007669"/>
    <property type="project" value="InterPro"/>
</dbReference>
<dbReference type="CDD" id="cd07786">
    <property type="entry name" value="FGGY_EcGK_like"/>
    <property type="match status" value="1"/>
</dbReference>
<dbReference type="FunFam" id="3.30.420.40:FF:000007">
    <property type="entry name" value="Glycerol kinase"/>
    <property type="match status" value="1"/>
</dbReference>
<dbReference type="FunFam" id="3.30.420.40:FF:000008">
    <property type="entry name" value="Glycerol kinase"/>
    <property type="match status" value="1"/>
</dbReference>
<dbReference type="Gene3D" id="3.30.420.40">
    <property type="match status" value="2"/>
</dbReference>
<dbReference type="HAMAP" id="MF_00186">
    <property type="entry name" value="Glycerol_kin"/>
    <property type="match status" value="1"/>
</dbReference>
<dbReference type="InterPro" id="IPR043129">
    <property type="entry name" value="ATPase_NBD"/>
</dbReference>
<dbReference type="InterPro" id="IPR000577">
    <property type="entry name" value="Carb_kinase_FGGY"/>
</dbReference>
<dbReference type="InterPro" id="IPR018483">
    <property type="entry name" value="Carb_kinase_FGGY_CS"/>
</dbReference>
<dbReference type="InterPro" id="IPR018485">
    <property type="entry name" value="FGGY_C"/>
</dbReference>
<dbReference type="InterPro" id="IPR018484">
    <property type="entry name" value="FGGY_N"/>
</dbReference>
<dbReference type="InterPro" id="IPR005999">
    <property type="entry name" value="Glycerol_kin"/>
</dbReference>
<dbReference type="NCBIfam" id="TIGR01311">
    <property type="entry name" value="glycerol_kin"/>
    <property type="match status" value="1"/>
</dbReference>
<dbReference type="NCBIfam" id="NF000756">
    <property type="entry name" value="PRK00047.1"/>
    <property type="match status" value="1"/>
</dbReference>
<dbReference type="PANTHER" id="PTHR10196:SF69">
    <property type="entry name" value="GLYCEROL KINASE"/>
    <property type="match status" value="1"/>
</dbReference>
<dbReference type="PANTHER" id="PTHR10196">
    <property type="entry name" value="SUGAR KINASE"/>
    <property type="match status" value="1"/>
</dbReference>
<dbReference type="Pfam" id="PF02782">
    <property type="entry name" value="FGGY_C"/>
    <property type="match status" value="1"/>
</dbReference>
<dbReference type="Pfam" id="PF00370">
    <property type="entry name" value="FGGY_N"/>
    <property type="match status" value="1"/>
</dbReference>
<dbReference type="PIRSF" id="PIRSF000538">
    <property type="entry name" value="GlpK"/>
    <property type="match status" value="1"/>
</dbReference>
<dbReference type="SUPFAM" id="SSF53067">
    <property type="entry name" value="Actin-like ATPase domain"/>
    <property type="match status" value="2"/>
</dbReference>
<dbReference type="PROSITE" id="PS00933">
    <property type="entry name" value="FGGY_KINASES_1"/>
    <property type="match status" value="1"/>
</dbReference>
<dbReference type="PROSITE" id="PS00445">
    <property type="entry name" value="FGGY_KINASES_2"/>
    <property type="match status" value="1"/>
</dbReference>
<reference key="1">
    <citation type="journal article" date="2002" name="Nature">
        <title>Comparison of the genomes of two Xanthomonas pathogens with differing host specificities.</title>
        <authorList>
            <person name="da Silva A.C.R."/>
            <person name="Ferro J.A."/>
            <person name="Reinach F.C."/>
            <person name="Farah C.S."/>
            <person name="Furlan L.R."/>
            <person name="Quaggio R.B."/>
            <person name="Monteiro-Vitorello C.B."/>
            <person name="Van Sluys M.A."/>
            <person name="Almeida N.F. Jr."/>
            <person name="Alves L.M.C."/>
            <person name="do Amaral A.M."/>
            <person name="Bertolini M.C."/>
            <person name="Camargo L.E.A."/>
            <person name="Camarotte G."/>
            <person name="Cannavan F."/>
            <person name="Cardozo J."/>
            <person name="Chambergo F."/>
            <person name="Ciapina L.P."/>
            <person name="Cicarelli R.M.B."/>
            <person name="Coutinho L.L."/>
            <person name="Cursino-Santos J.R."/>
            <person name="El-Dorry H."/>
            <person name="Faria J.B."/>
            <person name="Ferreira A.J.S."/>
            <person name="Ferreira R.C.C."/>
            <person name="Ferro M.I.T."/>
            <person name="Formighieri E.F."/>
            <person name="Franco M.C."/>
            <person name="Greggio C.C."/>
            <person name="Gruber A."/>
            <person name="Katsuyama A.M."/>
            <person name="Kishi L.T."/>
            <person name="Leite R.P."/>
            <person name="Lemos E.G.M."/>
            <person name="Lemos M.V.F."/>
            <person name="Locali E.C."/>
            <person name="Machado M.A."/>
            <person name="Madeira A.M.B.N."/>
            <person name="Martinez-Rossi N.M."/>
            <person name="Martins E.C."/>
            <person name="Meidanis J."/>
            <person name="Menck C.F.M."/>
            <person name="Miyaki C.Y."/>
            <person name="Moon D.H."/>
            <person name="Moreira L.M."/>
            <person name="Novo M.T.M."/>
            <person name="Okura V.K."/>
            <person name="Oliveira M.C."/>
            <person name="Oliveira V.R."/>
            <person name="Pereira H.A."/>
            <person name="Rossi A."/>
            <person name="Sena J.A.D."/>
            <person name="Silva C."/>
            <person name="de Souza R.F."/>
            <person name="Spinola L.A.F."/>
            <person name="Takita M.A."/>
            <person name="Tamura R.E."/>
            <person name="Teixeira E.C."/>
            <person name="Tezza R.I.D."/>
            <person name="Trindade dos Santos M."/>
            <person name="Truffi D."/>
            <person name="Tsai S.M."/>
            <person name="White F.F."/>
            <person name="Setubal J.C."/>
            <person name="Kitajima J.P."/>
        </authorList>
    </citation>
    <scope>NUCLEOTIDE SEQUENCE [LARGE SCALE GENOMIC DNA]</scope>
    <source>
        <strain>ATCC 33913 / DSM 3586 / NCPPB 528 / LMG 568 / P 25</strain>
    </source>
</reference>